<proteinExistence type="evidence at protein level"/>
<evidence type="ECO:0000250" key="1">
    <source>
        <dbReference type="UniProtKB" id="P28026"/>
    </source>
</evidence>
<evidence type="ECO:0000250" key="2">
    <source>
        <dbReference type="UniProtKB" id="P51028"/>
    </source>
</evidence>
<evidence type="ECO:0000250" key="3">
    <source>
        <dbReference type="UniProtKB" id="P56704"/>
    </source>
</evidence>
<evidence type="ECO:0000255" key="4"/>
<evidence type="ECO:0000269" key="5">
    <source>
    </source>
</evidence>
<evidence type="ECO:0000303" key="6">
    <source ref="2"/>
</evidence>
<evidence type="ECO:0000305" key="7"/>
<evidence type="ECO:0007829" key="8">
    <source>
        <dbReference type="PDB" id="7KC4"/>
    </source>
</evidence>
<feature type="signal peptide" evidence="4">
    <location>
        <begin position="1"/>
        <end position="24"/>
    </location>
</feature>
<feature type="chain" id="PRO_0000041448" description="Protein Wnt-8a">
    <location>
        <begin position="25"/>
        <end position="351"/>
    </location>
</feature>
<feature type="lipid moiety-binding region" description="O-palmitoleoyl serine" evidence="1">
    <location>
        <position position="186"/>
    </location>
</feature>
<feature type="glycosylation site" description="N-linked (GlcNAc...) asparagine" evidence="4">
    <location>
        <position position="103"/>
    </location>
</feature>
<feature type="glycosylation site" description="N-linked (GlcNAc...) asparagine" evidence="4">
    <location>
        <position position="262"/>
    </location>
</feature>
<feature type="glycosylation site" description="N-linked (GlcNAc...) asparagine" evidence="4">
    <location>
        <position position="281"/>
    </location>
</feature>
<feature type="disulfide bond" evidence="1">
    <location>
        <begin position="54"/>
        <end position="65"/>
    </location>
</feature>
<feature type="disulfide bond" evidence="1">
    <location>
        <begin position="104"/>
        <end position="112"/>
    </location>
</feature>
<feature type="disulfide bond" evidence="1">
    <location>
        <begin position="114"/>
        <end position="132"/>
    </location>
</feature>
<feature type="disulfide bond" evidence="1">
    <location>
        <begin position="180"/>
        <end position="194"/>
    </location>
</feature>
<feature type="disulfide bond" evidence="1">
    <location>
        <begin position="182"/>
        <end position="189"/>
    </location>
</feature>
<feature type="disulfide bond" evidence="1">
    <location>
        <begin position="259"/>
        <end position="297"/>
    </location>
</feature>
<feature type="disulfide bond" evidence="1">
    <location>
        <begin position="275"/>
        <end position="290"/>
    </location>
</feature>
<feature type="disulfide bond" evidence="1">
    <location>
        <begin position="294"/>
        <end position="336"/>
    </location>
</feature>
<feature type="disulfide bond" evidence="1">
    <location>
        <begin position="312"/>
        <end position="327"/>
    </location>
</feature>
<feature type="disulfide bond" evidence="1">
    <location>
        <begin position="314"/>
        <end position="324"/>
    </location>
</feature>
<feature type="disulfide bond" evidence="1">
    <location>
        <begin position="319"/>
        <end position="320"/>
    </location>
</feature>
<feature type="splice variant" id="VSP_062497" description="In isoform 3.">
    <original>MGNLFMLWAALGICCAAFSASAW</original>
    <variation>MLCCIQCLCLVSPFPTLTPCQGGPHCLIPIHLCLTFSLFGR</variation>
    <location>
        <begin position="1"/>
        <end position="23"/>
    </location>
</feature>
<feature type="splice variant" id="VSP_038706" description="In isoform 2." evidence="6">
    <original>KGSA</original>
    <variation>RVWFGVYI</variation>
    <location>
        <begin position="348"/>
        <end position="351"/>
    </location>
</feature>
<feature type="helix" evidence="8">
    <location>
        <begin position="25"/>
        <end position="30"/>
    </location>
</feature>
<feature type="helix" evidence="8">
    <location>
        <begin position="40"/>
        <end position="57"/>
    </location>
</feature>
<feature type="turn" evidence="8">
    <location>
        <begin position="58"/>
        <end position="60"/>
    </location>
</feature>
<feature type="helix" evidence="8">
    <location>
        <begin position="67"/>
        <end position="69"/>
    </location>
</feature>
<feature type="turn" evidence="8">
    <location>
        <begin position="70"/>
        <end position="73"/>
    </location>
</feature>
<feature type="helix" evidence="8">
    <location>
        <begin position="77"/>
        <end position="80"/>
    </location>
</feature>
<feature type="helix" evidence="8">
    <location>
        <begin position="83"/>
        <end position="105"/>
    </location>
</feature>
<feature type="turn" evidence="8">
    <location>
        <begin position="127"/>
        <end position="130"/>
    </location>
</feature>
<feature type="turn" evidence="8">
    <location>
        <begin position="134"/>
        <end position="136"/>
    </location>
</feature>
<feature type="helix" evidence="8">
    <location>
        <begin position="137"/>
        <end position="148"/>
    </location>
</feature>
<feature type="helix" evidence="8">
    <location>
        <begin position="156"/>
        <end position="175"/>
    </location>
</feature>
<feature type="strand" evidence="8">
    <location>
        <begin position="177"/>
        <end position="182"/>
    </location>
</feature>
<feature type="strand" evidence="8">
    <location>
        <begin position="184"/>
        <end position="187"/>
    </location>
</feature>
<feature type="strand" evidence="8">
    <location>
        <begin position="189"/>
        <end position="197"/>
    </location>
</feature>
<feature type="helix" evidence="8">
    <location>
        <begin position="201"/>
        <end position="213"/>
    </location>
</feature>
<feature type="strand" evidence="8">
    <location>
        <begin position="250"/>
        <end position="253"/>
    </location>
</feature>
<feature type="turn" evidence="8">
    <location>
        <begin position="263"/>
        <end position="266"/>
    </location>
</feature>
<feature type="turn" evidence="8">
    <location>
        <begin position="292"/>
        <end position="294"/>
    </location>
</feature>
<feature type="strand" evidence="8">
    <location>
        <begin position="295"/>
        <end position="297"/>
    </location>
</feature>
<feature type="strand" evidence="8">
    <location>
        <begin position="307"/>
        <end position="310"/>
    </location>
</feature>
<feature type="strand" evidence="8">
    <location>
        <begin position="327"/>
        <end position="330"/>
    </location>
</feature>
<organism>
    <name type="scientific">Homo sapiens</name>
    <name type="common">Human</name>
    <dbReference type="NCBI Taxonomy" id="9606"/>
    <lineage>
        <taxon>Eukaryota</taxon>
        <taxon>Metazoa</taxon>
        <taxon>Chordata</taxon>
        <taxon>Craniata</taxon>
        <taxon>Vertebrata</taxon>
        <taxon>Euteleostomi</taxon>
        <taxon>Mammalia</taxon>
        <taxon>Eutheria</taxon>
        <taxon>Euarchontoglires</taxon>
        <taxon>Primates</taxon>
        <taxon>Haplorrhini</taxon>
        <taxon>Catarrhini</taxon>
        <taxon>Hominidae</taxon>
        <taxon>Homo</taxon>
    </lineage>
</organism>
<dbReference type="EMBL" id="AB057725">
    <property type="protein sequence ID" value="BAB60960.1"/>
    <property type="molecule type" value="mRNA"/>
</dbReference>
<dbReference type="EMBL" id="AY009402">
    <property type="protein sequence ID" value="AAG38662.1"/>
    <property type="molecule type" value="mRNA"/>
</dbReference>
<dbReference type="EMBL" id="AC113382">
    <property type="status" value="NOT_ANNOTATED_CDS"/>
    <property type="molecule type" value="Genomic_DNA"/>
</dbReference>
<dbReference type="CCDS" id="CCDS43368.1">
    <molecule id="Q9H1J5-1"/>
</dbReference>
<dbReference type="CCDS" id="CCDS75311.1">
    <molecule id="Q9H1J5-3"/>
</dbReference>
<dbReference type="RefSeq" id="NP_001287867.1">
    <property type="nucleotide sequence ID" value="NM_001300938.1"/>
</dbReference>
<dbReference type="RefSeq" id="NP_001287868.1">
    <molecule id="Q9H1J5-3"/>
    <property type="nucleotide sequence ID" value="NM_001300939.2"/>
</dbReference>
<dbReference type="RefSeq" id="NP_490645.1">
    <molecule id="Q9H1J5-1"/>
    <property type="nucleotide sequence ID" value="NM_058244.4"/>
</dbReference>
<dbReference type="PDB" id="7KC4">
    <property type="method" value="EM"/>
    <property type="resolution" value="3.19 A"/>
    <property type="chains" value="D=1-351"/>
</dbReference>
<dbReference type="PDBsum" id="7KC4"/>
<dbReference type="EMDB" id="EMD-22806"/>
<dbReference type="SMR" id="Q9H1J5"/>
<dbReference type="BioGRID" id="113315">
    <property type="interactions" value="28"/>
</dbReference>
<dbReference type="FunCoup" id="Q9H1J5">
    <property type="interactions" value="433"/>
</dbReference>
<dbReference type="IntAct" id="Q9H1J5">
    <property type="interactions" value="6"/>
</dbReference>
<dbReference type="STRING" id="9606.ENSP00000426653"/>
<dbReference type="GlyCosmos" id="Q9H1J5">
    <property type="glycosylation" value="3 sites, No reported glycans"/>
</dbReference>
<dbReference type="GlyGen" id="Q9H1J5">
    <property type="glycosylation" value="3 sites"/>
</dbReference>
<dbReference type="iPTMnet" id="Q9H1J5"/>
<dbReference type="PhosphoSitePlus" id="Q9H1J5"/>
<dbReference type="BioMuta" id="WNT8A"/>
<dbReference type="DMDM" id="288558833"/>
<dbReference type="REPRODUCTION-2DPAGE" id="Q9H1J5"/>
<dbReference type="jPOST" id="Q9H1J5"/>
<dbReference type="MassIVE" id="Q9H1J5"/>
<dbReference type="PaxDb" id="9606-ENSP00000426653"/>
<dbReference type="PeptideAtlas" id="Q9H1J5"/>
<dbReference type="Antibodypedia" id="26566">
    <property type="antibodies" value="217 antibodies from 31 providers"/>
</dbReference>
<dbReference type="DNASU" id="7478"/>
<dbReference type="Ensembl" id="ENST00000361560.6">
    <molecule id="Q9H1J5-2"/>
    <property type="protein sequence ID" value="ENSP00000354726.2"/>
    <property type="gene ID" value="ENSG00000061492.12"/>
</dbReference>
<dbReference type="Ensembl" id="ENST00000398754.1">
    <molecule id="Q9H1J5-1"/>
    <property type="protein sequence ID" value="ENSP00000381739.1"/>
    <property type="gene ID" value="ENSG00000061492.12"/>
</dbReference>
<dbReference type="Ensembl" id="ENST00000506684.6">
    <molecule id="Q9H1J5-3"/>
    <property type="protein sequence ID" value="ENSP00000426653.1"/>
    <property type="gene ID" value="ENSG00000061492.12"/>
</dbReference>
<dbReference type="GeneID" id="7478"/>
<dbReference type="KEGG" id="hsa:7478"/>
<dbReference type="MANE-Select" id="ENST00000506684.6">
    <molecule id="Q9H1J5-3"/>
    <property type="protein sequence ID" value="ENSP00000426653.1"/>
    <property type="RefSeq nucleotide sequence ID" value="NM_001300939.2"/>
    <property type="RefSeq protein sequence ID" value="NP_001287868.1"/>
</dbReference>
<dbReference type="UCSC" id="uc003lcd.1">
    <molecule id="Q9H1J5-1"/>
    <property type="organism name" value="human"/>
</dbReference>
<dbReference type="AGR" id="HGNC:12788"/>
<dbReference type="CTD" id="7478"/>
<dbReference type="DisGeNET" id="7478"/>
<dbReference type="GeneCards" id="WNT8A"/>
<dbReference type="HGNC" id="HGNC:12788">
    <property type="gene designation" value="WNT8A"/>
</dbReference>
<dbReference type="HPA" id="ENSG00000061492">
    <property type="expression patterns" value="Not detected"/>
</dbReference>
<dbReference type="MIM" id="606360">
    <property type="type" value="gene"/>
</dbReference>
<dbReference type="neXtProt" id="NX_Q9H1J5"/>
<dbReference type="OpenTargets" id="ENSG00000061492"/>
<dbReference type="PharmGKB" id="PA37389"/>
<dbReference type="VEuPathDB" id="HostDB:ENSG00000061492"/>
<dbReference type="eggNOG" id="KOG3913">
    <property type="taxonomic scope" value="Eukaryota"/>
</dbReference>
<dbReference type="GeneTree" id="ENSGT00940000157840"/>
<dbReference type="HOGENOM" id="CLU_033039_1_2_1"/>
<dbReference type="InParanoid" id="Q9H1J5"/>
<dbReference type="OMA" id="ASCNCKF"/>
<dbReference type="OrthoDB" id="5945655at2759"/>
<dbReference type="PAN-GO" id="Q9H1J5">
    <property type="GO annotations" value="6 GO annotations based on evolutionary models"/>
</dbReference>
<dbReference type="PhylomeDB" id="Q9H1J5"/>
<dbReference type="TreeFam" id="TF105310"/>
<dbReference type="PathwayCommons" id="Q9H1J5"/>
<dbReference type="Reactome" id="R-HSA-201681">
    <property type="pathway name" value="TCF dependent signaling in response to WNT"/>
</dbReference>
<dbReference type="Reactome" id="R-HSA-3238698">
    <property type="pathway name" value="WNT ligand biogenesis and trafficking"/>
</dbReference>
<dbReference type="Reactome" id="R-HSA-373080">
    <property type="pathway name" value="Class B/2 (Secretin family receptors)"/>
</dbReference>
<dbReference type="Reactome" id="R-HSA-4641262">
    <property type="pathway name" value="Disassembly of the destruction complex and recruitment of AXIN to the membrane"/>
</dbReference>
<dbReference type="SignaLink" id="Q9H1J5"/>
<dbReference type="SIGNOR" id="Q9H1J5"/>
<dbReference type="BioGRID-ORCS" id="7478">
    <property type="hits" value="8 hits in 1142 CRISPR screens"/>
</dbReference>
<dbReference type="GenomeRNAi" id="7478"/>
<dbReference type="Pharos" id="Q9H1J5">
    <property type="development level" value="Tbio"/>
</dbReference>
<dbReference type="PRO" id="PR:Q9H1J5"/>
<dbReference type="Proteomes" id="UP000005640">
    <property type="component" value="Chromosome 5"/>
</dbReference>
<dbReference type="RNAct" id="Q9H1J5">
    <property type="molecule type" value="protein"/>
</dbReference>
<dbReference type="Bgee" id="ENSG00000061492">
    <property type="expression patterns" value="Expressed in primordial germ cell in gonad and 21 other cell types or tissues"/>
</dbReference>
<dbReference type="ExpressionAtlas" id="Q9H1J5">
    <property type="expression patterns" value="baseline and differential"/>
</dbReference>
<dbReference type="GO" id="GO:0062023">
    <property type="term" value="C:collagen-containing extracellular matrix"/>
    <property type="evidence" value="ECO:0000250"/>
    <property type="project" value="BHF-UCL"/>
</dbReference>
<dbReference type="GO" id="GO:0005576">
    <property type="term" value="C:extracellular region"/>
    <property type="evidence" value="ECO:0000304"/>
    <property type="project" value="Reactome"/>
</dbReference>
<dbReference type="GO" id="GO:0005615">
    <property type="term" value="C:extracellular space"/>
    <property type="evidence" value="ECO:0000318"/>
    <property type="project" value="GO_Central"/>
</dbReference>
<dbReference type="GO" id="GO:0005125">
    <property type="term" value="F:cytokine activity"/>
    <property type="evidence" value="ECO:0000318"/>
    <property type="project" value="GO_Central"/>
</dbReference>
<dbReference type="GO" id="GO:0005109">
    <property type="term" value="F:frizzled binding"/>
    <property type="evidence" value="ECO:0000318"/>
    <property type="project" value="GO_Central"/>
</dbReference>
<dbReference type="GO" id="GO:0048018">
    <property type="term" value="F:receptor ligand activity"/>
    <property type="evidence" value="ECO:0000314"/>
    <property type="project" value="WormBase"/>
</dbReference>
<dbReference type="GO" id="GO:0009948">
    <property type="term" value="P:anterior/posterior axis specification"/>
    <property type="evidence" value="ECO:0000250"/>
    <property type="project" value="ARUK-UCL"/>
</dbReference>
<dbReference type="GO" id="GO:0060070">
    <property type="term" value="P:canonical Wnt signaling pathway"/>
    <property type="evidence" value="ECO:0000314"/>
    <property type="project" value="WormBase"/>
</dbReference>
<dbReference type="GO" id="GO:0045165">
    <property type="term" value="P:cell fate commitment"/>
    <property type="evidence" value="ECO:0000318"/>
    <property type="project" value="GO_Central"/>
</dbReference>
<dbReference type="GO" id="GO:0009950">
    <property type="term" value="P:dorsal/ventral axis specification"/>
    <property type="evidence" value="ECO:0000250"/>
    <property type="project" value="BHF-UCL"/>
</dbReference>
<dbReference type="GO" id="GO:0014034">
    <property type="term" value="P:neural crest cell fate commitment"/>
    <property type="evidence" value="ECO:0000250"/>
    <property type="project" value="BHF-UCL"/>
</dbReference>
<dbReference type="GO" id="GO:0030182">
    <property type="term" value="P:neuron differentiation"/>
    <property type="evidence" value="ECO:0000318"/>
    <property type="project" value="GO_Central"/>
</dbReference>
<dbReference type="GO" id="GO:0045944">
    <property type="term" value="P:positive regulation of transcription by RNA polymerase II"/>
    <property type="evidence" value="ECO:0000250"/>
    <property type="project" value="BHF-UCL"/>
</dbReference>
<dbReference type="GO" id="GO:0032526">
    <property type="term" value="P:response to retinoic acid"/>
    <property type="evidence" value="ECO:0000303"/>
    <property type="project" value="BHF-UCL"/>
</dbReference>
<dbReference type="GO" id="GO:0062009">
    <property type="term" value="P:secondary palate development"/>
    <property type="evidence" value="ECO:0000315"/>
    <property type="project" value="BHF-UCL"/>
</dbReference>
<dbReference type="CDD" id="cd19351">
    <property type="entry name" value="Wnt_Wnt8a"/>
    <property type="match status" value="1"/>
</dbReference>
<dbReference type="FunFam" id="3.30.2460.20:FF:000003">
    <property type="entry name" value="Protein Wnt"/>
    <property type="match status" value="1"/>
</dbReference>
<dbReference type="Gene3D" id="3.30.2460.20">
    <property type="match status" value="1"/>
</dbReference>
<dbReference type="InterPro" id="IPR034312">
    <property type="entry name" value="Protein_Wnt-8A/8C"/>
</dbReference>
<dbReference type="InterPro" id="IPR005817">
    <property type="entry name" value="Wnt"/>
</dbReference>
<dbReference type="InterPro" id="IPR013301">
    <property type="entry name" value="Wnt8"/>
</dbReference>
<dbReference type="InterPro" id="IPR043158">
    <property type="entry name" value="Wnt_C"/>
</dbReference>
<dbReference type="InterPro" id="IPR018161">
    <property type="entry name" value="Wnt_CS"/>
</dbReference>
<dbReference type="PANTHER" id="PTHR12027:SF92">
    <property type="entry name" value="PROTEIN WNT-8A"/>
    <property type="match status" value="1"/>
</dbReference>
<dbReference type="PANTHER" id="PTHR12027">
    <property type="entry name" value="WNT RELATED"/>
    <property type="match status" value="1"/>
</dbReference>
<dbReference type="Pfam" id="PF00110">
    <property type="entry name" value="wnt"/>
    <property type="match status" value="1"/>
</dbReference>
<dbReference type="PRINTS" id="PR01892">
    <property type="entry name" value="WNT8PROTEIN"/>
</dbReference>
<dbReference type="PRINTS" id="PR01349">
    <property type="entry name" value="WNTPROTEIN"/>
</dbReference>
<dbReference type="SMART" id="SM00097">
    <property type="entry name" value="WNT1"/>
    <property type="match status" value="1"/>
</dbReference>
<dbReference type="PROSITE" id="PS00246">
    <property type="entry name" value="WNT1"/>
    <property type="match status" value="1"/>
</dbReference>
<gene>
    <name type="primary">WNT8A</name>
    <name type="synonym">WNT8D</name>
</gene>
<keyword id="KW-0002">3D-structure</keyword>
<keyword id="KW-0025">Alternative splicing</keyword>
<keyword id="KW-0217">Developmental protein</keyword>
<keyword id="KW-1015">Disulfide bond</keyword>
<keyword id="KW-0272">Extracellular matrix</keyword>
<keyword id="KW-0325">Glycoprotein</keyword>
<keyword id="KW-0449">Lipoprotein</keyword>
<keyword id="KW-1185">Reference proteome</keyword>
<keyword id="KW-0964">Secreted</keyword>
<keyword id="KW-0732">Signal</keyword>
<keyword id="KW-0879">Wnt signaling pathway</keyword>
<name>WNT8A_HUMAN</name>
<protein>
    <recommendedName>
        <fullName>Protein Wnt-8a</fullName>
    </recommendedName>
    <alternativeName>
        <fullName>Protein Wnt-8d</fullName>
    </alternativeName>
</protein>
<sequence length="351" mass="38849">MGNLFMLWAALGICCAAFSASAWSVNNFLITGPKAYLTYTTSVALGAQSGIEECKFQFAWERWNCPENALQLSTHNRLRSATRETSFIHAISSAGVMYIITKNCSMGDFENCGCDGSNNGKTGGHGWIWGGCSDNVEFGERISKLFVDSLEKGKDARALMNLHNNRAGRLAVRATMKRTCKCHGISGSCSIQTCWLQLAEFREMGDYLKAKYDQALKIEMDKRQLRAGNSAEGHWVPAEAFLPSAEAELIFLEESPDYCTCNSSLGIYGTEGRECLQNSHNTSRWERRSCGRLCTECGLQVEERKTEVISSCNCKFQWCCTVKCDQCRHVVSKYYCARSPGSAQSLGKGSA</sequence>
<accession>Q9H1J5</accession>
<accession>D6RF47</accession>
<accession>Q96S51</accession>
<reference key="1">
    <citation type="journal article" date="2001" name="Int. J. Oncol.">
        <title>Molecular cloning and characterization of human WNT8A.</title>
        <authorList>
            <person name="Saitoh T."/>
            <person name="Katoh M."/>
        </authorList>
    </citation>
    <scope>NUCLEOTIDE SEQUENCE [MRNA] (ISOFORM 1)</scope>
</reference>
<reference key="2">
    <citation type="submission" date="2000-08" db="EMBL/GenBank/DDBJ databases">
        <title>Molecular cloning and characterization of six novel human WNT genes.</title>
        <authorList>
            <person name="Testa T.T."/>
            <person name="Mossakowska D.E."/>
            <person name="Carter P.S."/>
            <person name="Hu E."/>
            <person name="Zhu Y."/>
            <person name="Kelsell D.P."/>
            <person name="Murdock P.R."/>
            <person name="Herrity N.C."/>
            <person name="Lewis C.J."/>
            <person name="Cross D.A."/>
            <person name="Culbert A.A."/>
            <person name="Reith A.D."/>
            <person name="Barnes M.R."/>
        </authorList>
    </citation>
    <scope>NUCLEOTIDE SEQUENCE [MRNA] (ISOFORM 2)</scope>
</reference>
<reference key="3">
    <citation type="journal article" date="2004" name="Nature">
        <title>The DNA sequence and comparative analysis of human chromosome 5.</title>
        <authorList>
            <person name="Schmutz J."/>
            <person name="Martin J."/>
            <person name="Terry A."/>
            <person name="Couronne O."/>
            <person name="Grimwood J."/>
            <person name="Lowry S."/>
            <person name="Gordon L.A."/>
            <person name="Scott D."/>
            <person name="Xie G."/>
            <person name="Huang W."/>
            <person name="Hellsten U."/>
            <person name="Tran-Gyamfi M."/>
            <person name="She X."/>
            <person name="Prabhakar S."/>
            <person name="Aerts A."/>
            <person name="Altherr M."/>
            <person name="Bajorek E."/>
            <person name="Black S."/>
            <person name="Branscomb E."/>
            <person name="Caoile C."/>
            <person name="Challacombe J.F."/>
            <person name="Chan Y.M."/>
            <person name="Denys M."/>
            <person name="Detter J.C."/>
            <person name="Escobar J."/>
            <person name="Flowers D."/>
            <person name="Fotopulos D."/>
            <person name="Glavina T."/>
            <person name="Gomez M."/>
            <person name="Gonzales E."/>
            <person name="Goodstein D."/>
            <person name="Grigoriev I."/>
            <person name="Groza M."/>
            <person name="Hammon N."/>
            <person name="Hawkins T."/>
            <person name="Haydu L."/>
            <person name="Israni S."/>
            <person name="Jett J."/>
            <person name="Kadner K."/>
            <person name="Kimball H."/>
            <person name="Kobayashi A."/>
            <person name="Lopez F."/>
            <person name="Lou Y."/>
            <person name="Martinez D."/>
            <person name="Medina C."/>
            <person name="Morgan J."/>
            <person name="Nandkeshwar R."/>
            <person name="Noonan J.P."/>
            <person name="Pitluck S."/>
            <person name="Pollard M."/>
            <person name="Predki P."/>
            <person name="Priest J."/>
            <person name="Ramirez L."/>
            <person name="Retterer J."/>
            <person name="Rodriguez A."/>
            <person name="Rogers S."/>
            <person name="Salamov A."/>
            <person name="Salazar A."/>
            <person name="Thayer N."/>
            <person name="Tice H."/>
            <person name="Tsai M."/>
            <person name="Ustaszewska A."/>
            <person name="Vo N."/>
            <person name="Wheeler J."/>
            <person name="Wu K."/>
            <person name="Yang J."/>
            <person name="Dickson M."/>
            <person name="Cheng J.-F."/>
            <person name="Eichler E.E."/>
            <person name="Olsen A."/>
            <person name="Pennacchio L.A."/>
            <person name="Rokhsar D.S."/>
            <person name="Richardson P."/>
            <person name="Lucas S.M."/>
            <person name="Myers R.M."/>
            <person name="Rubin E.M."/>
        </authorList>
    </citation>
    <scope>NUCLEOTIDE SEQUENCE [LARGE SCALE GENOMIC DNA]</scope>
</reference>
<reference key="4">
    <citation type="journal article" date="2016" name="Elife">
        <title>Active and water-soluble form of lipidated Wnt protein is maintained by a serum glycoprotein afamin/alpha-albumin.</title>
        <authorList>
            <person name="Mihara E."/>
            <person name="Hirai H."/>
            <person name="Yamamoto H."/>
            <person name="Tamura-Kawakami K."/>
            <person name="Matano M."/>
            <person name="Kikuchi A."/>
            <person name="Sato T."/>
            <person name="Takagi J."/>
        </authorList>
    </citation>
    <scope>INTERACTION WITH AFM</scope>
    <scope>SUBCELLULAR LOCATION</scope>
</reference>
<comment type="function">
    <text evidence="2">Ligand for members of the frizzled family of seven transmembrane receptors. Plays a role in embryonic patterning.</text>
</comment>
<comment type="subunit">
    <text>Forms a soluble 1:1 complex with AFM; this prevents oligomerization and is required for prolonged biological activity (PubMed:26902720). The complex with AFM may represent the physiological form in body fluids (PubMed:26902720).</text>
</comment>
<comment type="subcellular location">
    <subcellularLocation>
        <location evidence="7">Secreted</location>
        <location evidence="7">Extracellular space</location>
        <location evidence="7">Extracellular matrix</location>
    </subcellularLocation>
    <subcellularLocation>
        <location evidence="5">Secreted</location>
    </subcellularLocation>
</comment>
<comment type="alternative products">
    <event type="alternative splicing"/>
    <isoform>
        <id>Q9H1J5-1</id>
        <name>1</name>
        <sequence type="displayed"/>
    </isoform>
    <isoform>
        <id>Q9H1J5-2</id>
        <name>2</name>
        <sequence type="described" ref="VSP_038706"/>
    </isoform>
    <isoform>
        <id>Q9H1J5-3</id>
        <name>3</name>
        <sequence type="described" ref="VSP_062497"/>
    </isoform>
</comment>
<comment type="PTM">
    <text evidence="1 3">Palmitoleoylation is required for efficient binding to frizzled receptors (By similarity). Depalmitoleoylation leads to Wnt signaling pathway inhibition (By similarity).</text>
</comment>
<comment type="PTM">
    <text evidence="1">Proteolytic processing by TIKI1 and TIKI2 promotes oxidation and formation of large disulfide-bond oligomers, leading to inactivation of WNT8A.</text>
</comment>
<comment type="miscellaneous">
    <molecule>Isoform 2</molecule>
    <text evidence="7">May be produced at very low levels due to a premature stop codon in the mRNA, leading to nonsense-mediated mRNA decay.</text>
</comment>
<comment type="similarity">
    <text evidence="7">Belongs to the Wnt family.</text>
</comment>